<dbReference type="EC" id="3.4.21.90" evidence="2"/>
<dbReference type="EMBL" id="DQ241304">
    <property type="protein sequence ID" value="ABB45868.1"/>
    <property type="molecule type" value="Genomic_RNA"/>
</dbReference>
<dbReference type="SMR" id="Q306W5"/>
<dbReference type="MEROPS" id="S03.001"/>
<dbReference type="Proteomes" id="UP000008678">
    <property type="component" value="Genome"/>
</dbReference>
<dbReference type="GO" id="GO:0030430">
    <property type="term" value="C:host cell cytoplasm"/>
    <property type="evidence" value="ECO:0007669"/>
    <property type="project" value="UniProtKB-SubCell"/>
</dbReference>
<dbReference type="GO" id="GO:0042025">
    <property type="term" value="C:host cell nucleus"/>
    <property type="evidence" value="ECO:0007669"/>
    <property type="project" value="UniProtKB-SubCell"/>
</dbReference>
<dbReference type="GO" id="GO:0020002">
    <property type="term" value="C:host cell plasma membrane"/>
    <property type="evidence" value="ECO:0007669"/>
    <property type="project" value="UniProtKB-SubCell"/>
</dbReference>
<dbReference type="GO" id="GO:0016020">
    <property type="term" value="C:membrane"/>
    <property type="evidence" value="ECO:0007669"/>
    <property type="project" value="UniProtKB-KW"/>
</dbReference>
<dbReference type="GO" id="GO:0039619">
    <property type="term" value="C:T=4 icosahedral viral capsid"/>
    <property type="evidence" value="ECO:0007669"/>
    <property type="project" value="UniProtKB-KW"/>
</dbReference>
<dbReference type="GO" id="GO:0055036">
    <property type="term" value="C:virion membrane"/>
    <property type="evidence" value="ECO:0007669"/>
    <property type="project" value="UniProtKB-SubCell"/>
</dbReference>
<dbReference type="GO" id="GO:0003723">
    <property type="term" value="F:RNA binding"/>
    <property type="evidence" value="ECO:0007669"/>
    <property type="project" value="UniProtKB-KW"/>
</dbReference>
<dbReference type="GO" id="GO:0004252">
    <property type="term" value="F:serine-type endopeptidase activity"/>
    <property type="evidence" value="ECO:0007669"/>
    <property type="project" value="InterPro"/>
</dbReference>
<dbReference type="GO" id="GO:0005198">
    <property type="term" value="F:structural molecule activity"/>
    <property type="evidence" value="ECO:0007669"/>
    <property type="project" value="InterPro"/>
</dbReference>
<dbReference type="GO" id="GO:0039654">
    <property type="term" value="P:fusion of virus membrane with host endosome membrane"/>
    <property type="evidence" value="ECO:0007669"/>
    <property type="project" value="UniProtKB-KW"/>
</dbReference>
<dbReference type="GO" id="GO:0006508">
    <property type="term" value="P:proteolysis"/>
    <property type="evidence" value="ECO:0007669"/>
    <property type="project" value="UniProtKB-KW"/>
</dbReference>
<dbReference type="GO" id="GO:0046718">
    <property type="term" value="P:symbiont entry into host cell"/>
    <property type="evidence" value="ECO:0007669"/>
    <property type="project" value="UniProtKB-KW"/>
</dbReference>
<dbReference type="GO" id="GO:0039657">
    <property type="term" value="P:symbiont-mediated suppression of host gene expression"/>
    <property type="evidence" value="ECO:0007669"/>
    <property type="project" value="UniProtKB-KW"/>
</dbReference>
<dbReference type="GO" id="GO:0039722">
    <property type="term" value="P:symbiont-mediated suppression of host toll-like receptor signaling pathway"/>
    <property type="evidence" value="ECO:0000250"/>
    <property type="project" value="UniProtKB"/>
</dbReference>
<dbReference type="GO" id="GO:0019062">
    <property type="term" value="P:virion attachment to host cell"/>
    <property type="evidence" value="ECO:0007669"/>
    <property type="project" value="UniProtKB-KW"/>
</dbReference>
<dbReference type="FunFam" id="1.10.287.2230:FF:000001">
    <property type="entry name" value="Structural polyprotein"/>
    <property type="match status" value="1"/>
</dbReference>
<dbReference type="FunFam" id="2.40.10.10:FF:000075">
    <property type="entry name" value="Structural polyprotein"/>
    <property type="match status" value="1"/>
</dbReference>
<dbReference type="FunFam" id="2.40.10.10:FF:000076">
    <property type="entry name" value="Structural polyprotein"/>
    <property type="match status" value="1"/>
</dbReference>
<dbReference type="FunFam" id="2.60.40.350:FF:000002">
    <property type="entry name" value="Structural polyprotein"/>
    <property type="match status" value="1"/>
</dbReference>
<dbReference type="FunFam" id="2.60.98.10:FF:000002">
    <property type="entry name" value="Structural polyprotein"/>
    <property type="match status" value="1"/>
</dbReference>
<dbReference type="FunFam" id="2.60.98.10:FF:000003">
    <property type="entry name" value="Structural polyprotein"/>
    <property type="match status" value="1"/>
</dbReference>
<dbReference type="Gene3D" id="1.10.287.2230">
    <property type="match status" value="1"/>
</dbReference>
<dbReference type="Gene3D" id="2.60.40.350">
    <property type="match status" value="1"/>
</dbReference>
<dbReference type="Gene3D" id="2.60.40.3200">
    <property type="entry name" value="Alphavirus E2 glycoprotein, A domain"/>
    <property type="match status" value="1"/>
</dbReference>
<dbReference type="Gene3D" id="2.60.40.4310">
    <property type="entry name" value="Alphavirus E2 glycoprotein, domain B"/>
    <property type="match status" value="1"/>
</dbReference>
<dbReference type="Gene3D" id="2.60.40.2400">
    <property type="entry name" value="Alphavirus E2 glycoprotein, domain C"/>
    <property type="match status" value="1"/>
</dbReference>
<dbReference type="Gene3D" id="2.60.98.10">
    <property type="entry name" value="Tick-borne Encephalitis virus Glycoprotein, domain 1"/>
    <property type="match status" value="3"/>
</dbReference>
<dbReference type="Gene3D" id="2.40.10.10">
    <property type="entry name" value="Trypsin-like serine proteases"/>
    <property type="match status" value="2"/>
</dbReference>
<dbReference type="InterPro" id="IPR002548">
    <property type="entry name" value="Alpha_E1_glycop"/>
</dbReference>
<dbReference type="InterPro" id="IPR000936">
    <property type="entry name" value="Alpha_E2_glycop"/>
</dbReference>
<dbReference type="InterPro" id="IPR002533">
    <property type="entry name" value="Alpha_E3_glycop"/>
</dbReference>
<dbReference type="InterPro" id="IPR042304">
    <property type="entry name" value="Alphavir_E2_A"/>
</dbReference>
<dbReference type="InterPro" id="IPR042305">
    <property type="entry name" value="Alphavir_E2_B"/>
</dbReference>
<dbReference type="InterPro" id="IPR042306">
    <property type="entry name" value="Alphavir_E2_C"/>
</dbReference>
<dbReference type="InterPro" id="IPR000336">
    <property type="entry name" value="Flavivir/Alphavir_Ig-like_sf"/>
</dbReference>
<dbReference type="InterPro" id="IPR036253">
    <property type="entry name" value="Glycoprot_cen/dimer_sf"/>
</dbReference>
<dbReference type="InterPro" id="IPR038055">
    <property type="entry name" value="Glycoprot_E_dimer_dom"/>
</dbReference>
<dbReference type="InterPro" id="IPR014756">
    <property type="entry name" value="Ig_E-set"/>
</dbReference>
<dbReference type="InterPro" id="IPR009003">
    <property type="entry name" value="Peptidase_S1_PA"/>
</dbReference>
<dbReference type="InterPro" id="IPR043504">
    <property type="entry name" value="Peptidase_S1_PA_chymotrypsin"/>
</dbReference>
<dbReference type="InterPro" id="IPR000930">
    <property type="entry name" value="Peptidase_S3"/>
</dbReference>
<dbReference type="Pfam" id="PF01589">
    <property type="entry name" value="Alpha_E1_glycop"/>
    <property type="match status" value="1"/>
</dbReference>
<dbReference type="Pfam" id="PF00943">
    <property type="entry name" value="Alpha_E2_glycop"/>
    <property type="match status" value="1"/>
</dbReference>
<dbReference type="Pfam" id="PF01563">
    <property type="entry name" value="Alpha_E3_glycop"/>
    <property type="match status" value="1"/>
</dbReference>
<dbReference type="Pfam" id="PF00944">
    <property type="entry name" value="Peptidase_S3"/>
    <property type="match status" value="1"/>
</dbReference>
<dbReference type="PRINTS" id="PR00798">
    <property type="entry name" value="TOGAVIRIN"/>
</dbReference>
<dbReference type="SUPFAM" id="SSF81296">
    <property type="entry name" value="E set domains"/>
    <property type="match status" value="1"/>
</dbReference>
<dbReference type="SUPFAM" id="SSF50494">
    <property type="entry name" value="Trypsin-like serine proteases"/>
    <property type="match status" value="1"/>
</dbReference>
<dbReference type="SUPFAM" id="SSF56983">
    <property type="entry name" value="Viral glycoprotein, central and dimerisation domains"/>
    <property type="match status" value="1"/>
</dbReference>
<dbReference type="PROSITE" id="PS51690">
    <property type="entry name" value="ALPHAVIRUS_CP"/>
    <property type="match status" value="1"/>
</dbReference>
<sequence length="1242" mass="137333">MFPYPTLNYSPMAPVNPMAYRDPNPPRRRWRPFRPPLAAQIEDLRRSIANLTFKQRAPNPPAGPPAKRKKPAPKPKPAAPKKKRQPPPAKKQKRKQKPGKRQRMCMKLESDKTFPILLNGQVNGYACVVGGRVFKPLHVEGKIDNEQLAAIKLKKASIYDLEYGDVPQCMKSDTLQYTSEKPPGFYNWHHGAVQYENNRFTVPRGVGGKGDSGRPILDNRGRVVAIVLGGANEGSRTALSVVTWNQKGVTVKDTPEGSEPWSLTTVMCVLANITFPCDQPPCMPCCYEKNPHETLTMLEQNYDSQAYDQLLEAAVKCNSRRTRRDLETHFTQYKLARPYIADCSNCGHGRCDSPIAIEDVRGNAHAGYIRIQTSAMFGLKSDGVDLAYMSFMNGKTLKAIKIEHLYARTSAPCSLVSYHGYYLLAQCPPGDTVTVGFQDGANKHMCTIAHKVEFRPVGREKYRHPPAHGVELPCNKYTHKRADQGHYVEMHQPGLVADHSLLSLSSTKVKITVPSGSQVKYYCKCPDVQEGTTSGDHTTTCTDLKQCRAYLIDNKKWVFNSGKLPRGEGETFKGKLHVPFVPVTSKCTATLAPEPLVEHKHRSLILHLHPEHPTLLTTRALGNDARPTRQWVDQPTTVNFTVTGEGFEYTWGNHPPKRVWAQESGEGNPHGWPHEVVIYYYNRYPMTTIVGLCTCAAIIMVSCITSVWLLCRTRNLCITPYRLAPNAQVPILLAVLCCVKPTRADDTLQVLNYLWNNNQNFFWMQTLIPLAALIVCMRMLRCLLCCGPAFLLVCGALGAAAYEHTAVMPNKVGIPYKALVERPGYAPVHLQIQLVTTKIIPSANLEYITCKYKTKVPSPVVKCCGATQCTSKQHPDYQCQVFAGVYPFMWGGAYCFCDTENTQMSEAYIERAEECSVDQAKAYKVHTGTVQAVVNITYGSVSWRSADVYVNGETPAKIGDAKLTIGPLSSAWTPFDSKVVVYGHEVYNYDFPEYGTGKAGSFGDLQSRTLTSNDLYANTNLKLQRPQPGVVHTPYTQAPSGFERWKKDRGAPLNDIAPFGCTIALDPLRAENCAVGNIPLSIDIPDAAFTRISETPTVSDLECKITECTYASDFGGIATVAYKASKAGNCPIHSPSGIAVIKENDVTLADSGSFTFHFSTASIHPAFKMQICTSVVTCKGDCKPPKDHIVDYPAQHTETFTSAVSATAWSWLKVLVGSTSAFIVLGLIATAVVALVLFTHKH</sequence>
<reference key="1">
    <citation type="submission" date="2005-10" db="EMBL/GenBank/DDBJ databases">
        <title>Eastern equine encephalomyelitis virus strain.</title>
        <authorList>
            <person name="Kondig J.P."/>
            <person name="Turell M.J."/>
            <person name="Lee J.S."/>
            <person name="O'Guinn M.L."/>
            <person name="Wasieloski L.P. Jr."/>
        </authorList>
    </citation>
    <scope>NUCLEOTIDE SEQUENCE [GENOMIC RNA]</scope>
</reference>
<proteinExistence type="inferred from homology"/>
<evidence type="ECO:0000250" key="1"/>
<evidence type="ECO:0000250" key="2">
    <source>
        <dbReference type="UniProtKB" id="P03315"/>
    </source>
</evidence>
<evidence type="ECO:0000250" key="3">
    <source>
        <dbReference type="UniProtKB" id="P03316"/>
    </source>
</evidence>
<evidence type="ECO:0000250" key="4">
    <source>
        <dbReference type="UniProtKB" id="P09592"/>
    </source>
</evidence>
<evidence type="ECO:0000250" key="5">
    <source>
        <dbReference type="UniProtKB" id="P27284"/>
    </source>
</evidence>
<evidence type="ECO:0000250" key="6">
    <source>
        <dbReference type="UniProtKB" id="P36329"/>
    </source>
</evidence>
<evidence type="ECO:0000250" key="7">
    <source>
        <dbReference type="UniProtKB" id="Q86925"/>
    </source>
</evidence>
<evidence type="ECO:0000250" key="8">
    <source>
        <dbReference type="UniProtKB" id="Q8JUX5"/>
    </source>
</evidence>
<evidence type="ECO:0000255" key="9"/>
<evidence type="ECO:0000255" key="10">
    <source>
        <dbReference type="PROSITE-ProRule" id="PRU01027"/>
    </source>
</evidence>
<evidence type="ECO:0000256" key="11">
    <source>
        <dbReference type="SAM" id="MobiDB-lite"/>
    </source>
</evidence>
<name>POLS_EEEV1</name>
<keyword id="KW-0167">Capsid protein</keyword>
<keyword id="KW-0165">Cleavage on pair of basic residues</keyword>
<keyword id="KW-1015">Disulfide bond</keyword>
<keyword id="KW-1262">Eukaryotic host gene expression shutoff by virus</keyword>
<keyword id="KW-1191">Eukaryotic host transcription shutoff by virus</keyword>
<keyword id="KW-1170">Fusion of virus membrane with host endosomal membrane</keyword>
<keyword id="KW-1168">Fusion of virus membrane with host membrane</keyword>
<keyword id="KW-0325">Glycoprotein</keyword>
<keyword id="KW-1032">Host cell membrane</keyword>
<keyword id="KW-1035">Host cytoplasm</keyword>
<keyword id="KW-1190">Host gene expression shutoff by virus</keyword>
<keyword id="KW-1043">Host membrane</keyword>
<keyword id="KW-1048">Host nucleus</keyword>
<keyword id="KW-0945">Host-virus interaction</keyword>
<keyword id="KW-0378">Hydrolase</keyword>
<keyword id="KW-0449">Lipoprotein</keyword>
<keyword id="KW-0472">Membrane</keyword>
<keyword id="KW-0564">Palmitate</keyword>
<keyword id="KW-0597">Phosphoprotein</keyword>
<keyword id="KW-0645">Protease</keyword>
<keyword id="KW-0694">RNA-binding</keyword>
<keyword id="KW-0720">Serine protease</keyword>
<keyword id="KW-1144">T=4 icosahedral capsid protein</keyword>
<keyword id="KW-0812">Transmembrane</keyword>
<keyword id="KW-1133">Transmembrane helix</keyword>
<keyword id="KW-1161">Viral attachment to host cell</keyword>
<keyword id="KW-1162">Viral penetration into host cytoplasm</keyword>
<keyword id="KW-0946">Virion</keyword>
<keyword id="KW-1160">Virus entry into host cell</keyword>
<protein>
    <recommendedName>
        <fullName>Structural polyprotein</fullName>
    </recommendedName>
    <alternativeName>
        <fullName>p130</fullName>
    </alternativeName>
    <component>
        <recommendedName>
            <fullName>Capsid protein</fullName>
            <ecNumber evidence="2">3.4.21.90</ecNumber>
        </recommendedName>
        <alternativeName>
            <fullName>Coat protein</fullName>
            <shortName>C</shortName>
        </alternativeName>
    </component>
    <component>
        <recommendedName>
            <fullName>Precursor of protein E3/E2</fullName>
        </recommendedName>
        <alternativeName>
            <fullName>p62</fullName>
        </alternativeName>
        <alternativeName>
            <fullName>pE2</fullName>
        </alternativeName>
    </component>
    <component>
        <recommendedName>
            <fullName>Assembly protein E3</fullName>
        </recommendedName>
    </component>
    <component>
        <recommendedName>
            <fullName>Spike glycoprotein E2</fullName>
        </recommendedName>
        <alternativeName>
            <fullName>E2 envelope glycoprotein</fullName>
        </alternativeName>
    </component>
    <component>
        <recommendedName>
            <fullName>6K protein</fullName>
        </recommendedName>
    </component>
    <component>
        <recommendedName>
            <fullName>Spike glycoprotein E1</fullName>
        </recommendedName>
        <alternativeName>
            <fullName>E1 envelope glycoprotein</fullName>
        </alternativeName>
    </component>
</protein>
<organismHost>
    <name type="scientific">Aedes</name>
    <dbReference type="NCBI Taxonomy" id="7158"/>
</organismHost>
<organismHost>
    <name type="scientific">Homo sapiens</name>
    <name type="common">Human</name>
    <dbReference type="NCBI Taxonomy" id="9606"/>
</organismHost>
<organismHost>
    <name type="scientific">Passeriformes</name>
    <dbReference type="NCBI Taxonomy" id="9126"/>
</organismHost>
<organism>
    <name type="scientific">Eastern equine encephalitis virus (strain PE-0.0155)</name>
    <name type="common">EEEV</name>
    <name type="synonym">Eastern equine encephalomyelitis virus</name>
    <dbReference type="NCBI Taxonomy" id="374596"/>
    <lineage>
        <taxon>Viruses</taxon>
        <taxon>Riboviria</taxon>
        <taxon>Orthornavirae</taxon>
        <taxon>Kitrinoviricota</taxon>
        <taxon>Alsuviricetes</taxon>
        <taxon>Martellivirales</taxon>
        <taxon>Togaviridae</taxon>
        <taxon>Alphavirus</taxon>
        <taxon>Eastern equine encephalitis virus</taxon>
    </lineage>
</organism>
<feature type="chain" id="PRO_0000238718" description="Capsid protein" evidence="1">
    <location>
        <begin position="1"/>
        <end position="261"/>
    </location>
</feature>
<feature type="chain" id="PRO_0000238719" description="Precursor of protein E3/E2" evidence="1">
    <location>
        <begin position="262"/>
        <end position="744"/>
    </location>
</feature>
<feature type="chain" id="PRO_0000238720" description="Assembly protein E3" evidence="1">
    <location>
        <begin position="262"/>
        <end position="324"/>
    </location>
</feature>
<feature type="chain" id="PRO_0000238721" description="Spike glycoprotein E2" evidence="1">
    <location>
        <begin position="325"/>
        <end position="744"/>
    </location>
</feature>
<feature type="chain" id="PRO_0000238722" description="6K protein" evidence="1">
    <location>
        <begin position="745"/>
        <end position="801"/>
    </location>
</feature>
<feature type="chain" id="PRO_0000238723" description="Spike glycoprotein E1" evidence="1">
    <location>
        <begin position="802"/>
        <end position="1242"/>
    </location>
</feature>
<feature type="topological domain" description="Extracellular" evidence="9">
    <location>
        <begin position="325"/>
        <end position="688"/>
    </location>
</feature>
<feature type="transmembrane region" description="Helical" evidence="9">
    <location>
        <begin position="689"/>
        <end position="709"/>
    </location>
</feature>
<feature type="topological domain" description="Cytoplasmic" evidence="9">
    <location>
        <begin position="710"/>
        <end position="744"/>
    </location>
</feature>
<feature type="topological domain" description="Extracellular" evidence="9">
    <location>
        <begin position="745"/>
        <end position="759"/>
    </location>
</feature>
<feature type="transmembrane region" description="Helical" evidence="9">
    <location>
        <begin position="760"/>
        <end position="780"/>
    </location>
</feature>
<feature type="transmembrane region" description="Helical" evidence="9">
    <location>
        <begin position="781"/>
        <end position="801"/>
    </location>
</feature>
<feature type="topological domain" description="Extracellular" evidence="9">
    <location>
        <begin position="802"/>
        <end position="1218"/>
    </location>
</feature>
<feature type="transmembrane region" description="Helical" evidence="9">
    <location>
        <begin position="1219"/>
        <end position="1239"/>
    </location>
</feature>
<feature type="topological domain" description="Cytoplasmic" evidence="9">
    <location>
        <begin position="1240"/>
        <end position="1242"/>
    </location>
</feature>
<feature type="domain" description="Peptidase S3" evidence="10">
    <location>
        <begin position="112"/>
        <end position="261"/>
    </location>
</feature>
<feature type="region of interest" description="Disordered" evidence="11">
    <location>
        <begin position="1"/>
        <end position="104"/>
    </location>
</feature>
<feature type="region of interest" description="Necessary for nucleocapsid assembly and virus assembly" evidence="4">
    <location>
        <begin position="1"/>
        <end position="36"/>
    </location>
</feature>
<feature type="region of interest" description="Host transcription inhibition" evidence="4">
    <location>
        <begin position="37"/>
        <end position="70"/>
    </location>
</feature>
<feature type="region of interest" description="Binding to the viral RNA" evidence="5">
    <location>
        <begin position="83"/>
        <end position="113"/>
    </location>
</feature>
<feature type="region of interest" description="Ribosome-binding" evidence="5">
    <location>
        <begin position="98"/>
        <end position="112"/>
    </location>
</feature>
<feature type="region of interest" description="Functions as an uncleaved signal peptide for the precursor of protein E3/E2" evidence="2">
    <location>
        <begin position="262"/>
        <end position="273"/>
    </location>
</feature>
<feature type="region of interest" description="Transient transmembrane before p62-6K protein processing" evidence="9">
    <location>
        <begin position="717"/>
        <end position="737"/>
    </location>
</feature>
<feature type="region of interest" description="E1 fusion peptide loop" evidence="8">
    <location>
        <begin position="885"/>
        <end position="902"/>
    </location>
</feature>
<feature type="short sequence motif" description="Supraphysiological nuclear export signal" evidence="4">
    <location>
        <begin position="44"/>
        <end position="51"/>
    </location>
</feature>
<feature type="short sequence motif" description="Nuclear localization signal" evidence="4">
    <location>
        <begin position="67"/>
        <end position="70"/>
    </location>
</feature>
<feature type="compositionally biased region" description="Basic residues" evidence="11">
    <location>
        <begin position="66"/>
        <end position="104"/>
    </location>
</feature>
<feature type="active site" description="Charge relay system" evidence="10">
    <location>
        <position position="138"/>
    </location>
</feature>
<feature type="active site" description="Charge relay system" evidence="10">
    <location>
        <position position="160"/>
    </location>
</feature>
<feature type="active site" description="Charge relay system" evidence="10">
    <location>
        <position position="212"/>
    </location>
</feature>
<feature type="site" description="Involved in dimerization of the capsid protein" evidence="7">
    <location>
        <position position="186"/>
    </location>
</feature>
<feature type="site" description="Involved in dimerization of the capsid protein" evidence="7">
    <location>
        <position position="219"/>
    </location>
</feature>
<feature type="site" description="Cleavage; by autolysis" evidence="2">
    <location>
        <begin position="261"/>
        <end position="262"/>
    </location>
</feature>
<feature type="site" description="Cleavage; by host furin" evidence="1">
    <location>
        <begin position="324"/>
        <end position="325"/>
    </location>
</feature>
<feature type="site" description="Cleavage; by host signal peptidase" evidence="1">
    <location>
        <begin position="744"/>
        <end position="745"/>
    </location>
</feature>
<feature type="site" description="Cleavage; by host signal peptidase" evidence="1">
    <location>
        <begin position="801"/>
        <end position="802"/>
    </location>
</feature>
<feature type="modified residue" description="Phosphoserine" evidence="4">
    <location>
        <position position="110"/>
    </location>
</feature>
<feature type="modified residue" description="Phosphothreonine" evidence="4">
    <location>
        <position position="113"/>
    </location>
</feature>
<feature type="lipid moiety-binding region" description="S-palmitoyl cysteine; by host" evidence="1">
    <location>
        <position position="717"/>
    </location>
</feature>
<feature type="lipid moiety-binding region" description="S-palmitoyl cysteine; by host" evidence="1">
    <location>
        <position position="737"/>
    </location>
</feature>
<feature type="lipid moiety-binding region" description="S-palmitoyl cysteine; by host" evidence="1">
    <location>
        <position position="738"/>
    </location>
</feature>
<feature type="glycosylation site" description="N-linked (GlcNAc...) asparagine; by host" evidence="9">
    <location>
        <position position="272"/>
    </location>
</feature>
<feature type="disulfide bond" evidence="1">
    <location>
        <begin position="850"/>
        <end position="915"/>
    </location>
</feature>
<feature type="disulfide bond" evidence="1">
    <location>
        <begin position="863"/>
        <end position="895"/>
    </location>
</feature>
<feature type="disulfide bond" evidence="1">
    <location>
        <begin position="864"/>
        <end position="897"/>
    </location>
</feature>
<feature type="disulfide bond" evidence="1">
    <location>
        <begin position="869"/>
        <end position="879"/>
    </location>
</feature>
<feature type="disulfide bond" evidence="1">
    <location>
        <begin position="1061"/>
        <end position="1073"/>
    </location>
</feature>
<feature type="disulfide bond" evidence="1">
    <location>
        <begin position="1103"/>
        <end position="1178"/>
    </location>
</feature>
<feature type="disulfide bond" evidence="1">
    <location>
        <begin position="1108"/>
        <end position="1182"/>
    </location>
</feature>
<feature type="disulfide bond" evidence="1">
    <location>
        <begin position="1130"/>
        <end position="1172"/>
    </location>
</feature>
<accession>Q306W5</accession>
<comment type="function">
    <molecule>Capsid protein</molecule>
    <text evidence="2 3 4 5 6">Forms an icosahedral capsid with a T=4 symmetry composed of 240 copies of the capsid protein surrounded by a lipid membrane through which penetrate 80 spikes composed of trimers of E1-E2 heterodimers (By similarity). The capsid protein binds to the viral RNA genome at a site adjacent to a ribosome binding site for viral genome translation following genome release (By similarity). Possesses a protease activity that results in its autocatalytic cleavage from the nascent structural protein (By similarity). Following its self-cleavage, the capsid protein transiently associates with ribosomes, and within several minutes the protein binds to viral RNA and rapidly assembles into icosahedric core particles (By similarity). The resulting nucleocapsid eventually associates with the cytoplasmic domain of the spike glycoprotein E2 at the cell membrane, leading to budding and formation of mature virions (By similarity). In case of infection, new virions attach to target cells and after clathrin-mediated endocytosis their membrane fuses with the host endosomal membrane (By similarity). This leads to the release of the nucleocapsid into the cytoplasm, followed by an uncoating event necessary for the genomic RNA to become accessible (By similarity). The uncoating might be triggered by the interaction of capsid proteins with ribosomes (By similarity). Binding of ribosomes would release the genomic RNA since the same region is genomic RNA-binding and ribosome-binding (By similarity). Specifically inhibits interleukin-1 receptor-associated kinase 1/IRAK1-dependent signaling during viral entry, representing a means by which the alphaviruses may evade innate immune detection and activation prior to viral gene expression (By similarity). Inhibits host transcription (By similarity). Forms a tetrameric complex with XPO1/CRM1 and the nuclear import receptor importin (By similarity). This complex blocks the central channel of host nuclear pores thereby inhibiting the receptor-mediated nuclear transport and thus the host mRNA and rRNA transcription (By similarity). The inhibition of transcription is linked to a cytopathic effect on the host cell (By similarity).</text>
</comment>
<comment type="function">
    <molecule>Assembly protein E3</molecule>
    <text evidence="2">Provides the signal sequence for the translocation of the precursor of protein E3/E2 to the host endoplasmic reticulum. Furin-cleaved E3 remains associated with spike glycoprotein E1 and mediates pH protection of the latter during the transport via the secretory pathway. After virion release from the host cell, the assembly protein E3 is gradually released in the extracellular space.</text>
</comment>
<comment type="function">
    <molecule>Spike glycoprotein E2</molecule>
    <text evidence="2">Plays a role in viral attachment to target host cell, by binding to the cell receptor. Synthesized as a p62 precursor which is processed by furin at the cell membrane just before virion budding, giving rise to E2-E1 heterodimer. The p62-E1 heterodimer is stable, whereas E2-E1 is unstable and dissociate at low pH. p62 is processed at the last step, presumably to avoid E1 fusion activation before its final export to cell surface. E2 C-terminus contains a transitory transmembrane that would be disrupted by palmitoylation, resulting in reorientation of the C-terminal tail from lumenal to cytoplasmic side. This step is critical since E2 C-terminus is involved in budding by interacting with capsid proteins. This release of E2 C-terminus in cytoplasm occurs lately in protein export, and precludes premature assembly of particles at the endoplasmic reticulum membrane.</text>
</comment>
<comment type="function">
    <molecule>6K protein</molecule>
    <text evidence="2">Constitutive membrane protein involved in virus glycoprotein processing, cell permeabilization, and the budding of viral particles. Disrupts the calcium homeostasis of the cell, probably at the endoplasmic reticulum level. This leads to cytoplasmic calcium elevation. Because of its lipophilic properties, the 6K protein is postulated to influence the selection of lipids that interact with the transmembrane domains of the glycoproteins, which, in turn, affects the deformability of the bilayer required for the extreme curvature that occurs as budding proceeds. Present in low amount in virions, about 3% compared to viral glycoproteins.</text>
</comment>
<comment type="function">
    <molecule>Spike glycoprotein E1</molecule>
    <text evidence="2">Class II viral fusion protein. Fusion activity is inactive as long as E1 is bound to E2 in mature virion. After virus attachment to target cell and endocytosis, acidification of the endosome would induce dissociation of E1/E2 heterodimer and concomitant trimerization of the E1 subunits. This E1 trimer is fusion active, and promotes release of viral nucleocapsid in cytoplasm after endosome and viral membrane fusion. Efficient fusion requires the presence of cholesterol and sphingolipid in the target membrane. Fusion is optimal at levels of about 1 molecule of cholesterol per 2 molecules of phospholipids, and is specific for sterols containing a 3-beta-hydroxyl group.</text>
</comment>
<comment type="catalytic activity">
    <reaction evidence="3">
        <text>Autocatalytic release of the core protein from the N-terminus of the togavirus structural polyprotein by hydrolysis of a -Trp-|-Ser- bond.</text>
        <dbReference type="EC" id="3.4.21.90"/>
    </reaction>
</comment>
<comment type="subunit">
    <molecule>Capsid protein</molecule>
    <text evidence="2 3 4 8">Part of a tetrameric complex composed of host CRM1, host importin alpha/beta dimer and the viral capsid; this complex blocks the receptor-mediated transport through the nuclear pore (By similarity). Interacts with host phosphatase PPP1CA; this interaction dephosphorylates the capsid protein, which increases its ability to bind to the viral genome (By similarity). Interacts with host karyopherin KPNA4; this interaction allows the nuclear import of the viral capsid protein (By similarity). Interacts with spike glycoprotein E2 (By similarity). Interacts with host IRAK1; the interaction leads to inhibition of IRAK1-dependent signaling (By similarity).</text>
</comment>
<comment type="subunit">
    <molecule>Precursor of protein E3/E2</molecule>
    <text evidence="2 3 4">The precursor of protein E3/E2 and E1 form a heterodimer shortly after synthesis (By similarity).</text>
</comment>
<comment type="subunit">
    <molecule>Spike glycoprotein E1</molecule>
    <text evidence="2 3 4">The precursor of protein E3/E2 and E1 form a heterodimer shortly after synthesis (By similarity). Processing of the precursor of protein E3/E2 into E2 and E3 results in a heterodimer of the spike glycoproteins E2 and E1 (By similarity). Spike at virion surface are constituted of three E2-E1 heterodimers (By similarity). After target cell attachment and endocytosis, E1 change conformation to form homotrimers (By similarity). Interacts with 6K protein (By similarity).</text>
</comment>
<comment type="subunit">
    <molecule>Spike glycoprotein E2</molecule>
    <text evidence="2 3 4">Processing of the precursor of protein E3/E2 into E2 and E3 results in a heterodimer of the spike glycoproteins E2 and E1 (By similarity). Spike at virion surface are constituted of three E2-E1 heterodimers (By similarity). Interacts with 6K protein (By similarity).</text>
</comment>
<comment type="subunit">
    <molecule>6K protein</molecule>
    <text evidence="2 3 4">Interacts with spike glycoprotein E1 (By similarity). Interacts with spike glycoprotein E2 (By similarity).</text>
</comment>
<comment type="subcellular location">
    <molecule>Capsid protein</molecule>
    <subcellularLocation>
        <location evidence="3">Virion</location>
    </subcellularLocation>
    <subcellularLocation>
        <location evidence="4">Host cytoplasm</location>
    </subcellularLocation>
    <subcellularLocation>
        <location evidence="3">Host cell membrane</location>
    </subcellularLocation>
    <subcellularLocation>
        <location evidence="4">Host nucleus</location>
    </subcellularLocation>
</comment>
<comment type="subcellular location">
    <molecule>Spike glycoprotein E2</molecule>
    <subcellularLocation>
        <location evidence="8">Virion membrane</location>
        <topology evidence="9">Single-pass type I membrane protein</topology>
    </subcellularLocation>
    <subcellularLocation>
        <location evidence="3">Host cell membrane</location>
        <topology evidence="8">Single-pass type I membrane protein</topology>
    </subcellularLocation>
</comment>
<comment type="subcellular location">
    <molecule>6K protein</molecule>
    <subcellularLocation>
        <location evidence="3">Host cell membrane</location>
        <topology evidence="9">Multi-pass membrane protein</topology>
    </subcellularLocation>
    <subcellularLocation>
        <location evidence="3">Virion membrane</location>
        <topology evidence="9">Multi-pass membrane protein</topology>
    </subcellularLocation>
</comment>
<comment type="subcellular location">
    <molecule>Spike glycoprotein E1</molecule>
    <subcellularLocation>
        <location evidence="8">Virion membrane</location>
        <topology evidence="9">Single-pass type I membrane protein</topology>
    </subcellularLocation>
    <subcellularLocation>
        <location evidence="3 8">Host cell membrane</location>
        <topology evidence="9">Single-pass type I membrane protein</topology>
    </subcellularLocation>
</comment>
<comment type="domain">
    <text evidence="2">Structural polyprotein: As soon as the capsid protein has been autocleaved, an internal uncleaved signal peptide directs the remaining polyprotein to the endoplasmic reticulum.</text>
</comment>
<comment type="domain">
    <molecule>Capsid protein</molecule>
    <text evidence="3 4">The very N-terminus plays a role in the particle assembly process (By similarity). The N-terminus also contains a nuclear localization signal and a supraphysiological nuclear export signal (supraNES), which is an unusually strong NES that mediates host CRM1 binding in the absence of RanGTP and thus can bind CRM1, not only in the nucleus, but also in the cytoplasm (By similarity). The C-terminus functions as a protease during translation to cleave itself from the translating structural polyprotein (By similarity).</text>
</comment>
<comment type="PTM">
    <text evidence="2">Structural polyprotein: Specific enzymatic cleavages in vivo yield mature proteins. Capsid protein is auto-cleaved during polyprotein translation, unmasking a signal peptide at the N-terminus of the precursor of E3/E2. The remaining polyprotein is then targeted to the host endoplasmic reticulum, where host signal peptidase cleaves it into pE2, 6K and E1 proteins. pE2 is further processed to mature E3 and E2 by host furin in trans-Golgi vesicle.</text>
</comment>
<comment type="PTM">
    <molecule>Capsid protein</molecule>
    <text evidence="4">Phosphorylated on serine and threonine residues.</text>
</comment>
<comment type="PTM">
    <molecule>Spike glycoprotein E2</molecule>
    <text evidence="2">Palmitoylated via thioester bonds. These palmitoylations may induce disruption of the C-terminus transmembrane. This would result in the reorientation of E2 C-terminus from lumenal to cytoplasmic side.</text>
</comment>
<comment type="PTM">
    <molecule>Spike glycoprotein E1</molecule>
    <text evidence="2">N-glycosylated.</text>
</comment>
<comment type="PTM">
    <molecule>Spike glycoprotein E2</molecule>
    <text evidence="2">N-glycosylated.</text>
</comment>
<comment type="PTM">
    <molecule>Assembly protein E3</molecule>
    <text evidence="2">N-glycosylated.</text>
</comment>
<comment type="PTM">
    <molecule>6K protein</molecule>
    <text evidence="2">Palmitoylated via thioester bonds.</text>
</comment>
<comment type="miscellaneous">
    <text evidence="7">Structural polyprotein: Translated from a subgenomic RNA synthesized during togavirus replication.</text>
</comment>